<dbReference type="EMBL" id="X03950">
    <property type="protein sequence ID" value="CAA27579.1"/>
    <property type="molecule type" value="Genomic_DNA"/>
</dbReference>
<dbReference type="PIR" id="A26397">
    <property type="entry name" value="HTOR"/>
</dbReference>
<dbReference type="RefSeq" id="XP_054310351.1">
    <property type="nucleotide sequence ID" value="XM_054454376.1"/>
</dbReference>
<dbReference type="SMR" id="P06890"/>
<dbReference type="GeneID" id="129015802"/>
<dbReference type="GO" id="GO:0072562">
    <property type="term" value="C:blood microparticle"/>
    <property type="evidence" value="ECO:0007669"/>
    <property type="project" value="TreeGrafter"/>
</dbReference>
<dbReference type="GO" id="GO:0031838">
    <property type="term" value="C:haptoglobin-hemoglobin complex"/>
    <property type="evidence" value="ECO:0007669"/>
    <property type="project" value="TreeGrafter"/>
</dbReference>
<dbReference type="GO" id="GO:0005833">
    <property type="term" value="C:hemoglobin complex"/>
    <property type="evidence" value="ECO:0007669"/>
    <property type="project" value="InterPro"/>
</dbReference>
<dbReference type="GO" id="GO:0031720">
    <property type="term" value="F:haptoglobin binding"/>
    <property type="evidence" value="ECO:0007669"/>
    <property type="project" value="TreeGrafter"/>
</dbReference>
<dbReference type="GO" id="GO:0020037">
    <property type="term" value="F:heme binding"/>
    <property type="evidence" value="ECO:0007669"/>
    <property type="project" value="InterPro"/>
</dbReference>
<dbReference type="GO" id="GO:0005506">
    <property type="term" value="F:iron ion binding"/>
    <property type="evidence" value="ECO:0007669"/>
    <property type="project" value="InterPro"/>
</dbReference>
<dbReference type="GO" id="GO:0043177">
    <property type="term" value="F:organic acid binding"/>
    <property type="evidence" value="ECO:0007669"/>
    <property type="project" value="TreeGrafter"/>
</dbReference>
<dbReference type="GO" id="GO:0019825">
    <property type="term" value="F:oxygen binding"/>
    <property type="evidence" value="ECO:0007669"/>
    <property type="project" value="InterPro"/>
</dbReference>
<dbReference type="GO" id="GO:0005344">
    <property type="term" value="F:oxygen carrier activity"/>
    <property type="evidence" value="ECO:0007669"/>
    <property type="project" value="UniProtKB-KW"/>
</dbReference>
<dbReference type="GO" id="GO:0004601">
    <property type="term" value="F:peroxidase activity"/>
    <property type="evidence" value="ECO:0007669"/>
    <property type="project" value="TreeGrafter"/>
</dbReference>
<dbReference type="GO" id="GO:0042744">
    <property type="term" value="P:hydrogen peroxide catabolic process"/>
    <property type="evidence" value="ECO:0007669"/>
    <property type="project" value="TreeGrafter"/>
</dbReference>
<dbReference type="CDD" id="cd08927">
    <property type="entry name" value="Hb-alpha-like"/>
    <property type="match status" value="1"/>
</dbReference>
<dbReference type="FunFam" id="1.10.490.10:FF:000002">
    <property type="entry name" value="Hemoglobin subunit alpha"/>
    <property type="match status" value="1"/>
</dbReference>
<dbReference type="Gene3D" id="1.10.490.10">
    <property type="entry name" value="Globins"/>
    <property type="match status" value="1"/>
</dbReference>
<dbReference type="InterPro" id="IPR000971">
    <property type="entry name" value="Globin"/>
</dbReference>
<dbReference type="InterPro" id="IPR009050">
    <property type="entry name" value="Globin-like_sf"/>
</dbReference>
<dbReference type="InterPro" id="IPR012292">
    <property type="entry name" value="Globin/Proto"/>
</dbReference>
<dbReference type="InterPro" id="IPR002338">
    <property type="entry name" value="Hemoglobin_a-typ"/>
</dbReference>
<dbReference type="InterPro" id="IPR050056">
    <property type="entry name" value="Hemoglobin_oxygen_transport"/>
</dbReference>
<dbReference type="InterPro" id="IPR002339">
    <property type="entry name" value="Hemoglobin_pi"/>
</dbReference>
<dbReference type="PANTHER" id="PTHR11442">
    <property type="entry name" value="HEMOGLOBIN FAMILY MEMBER"/>
    <property type="match status" value="1"/>
</dbReference>
<dbReference type="PANTHER" id="PTHR11442:SF15">
    <property type="entry name" value="HEMOGLOBIN SUBUNIT THETA-1"/>
    <property type="match status" value="1"/>
</dbReference>
<dbReference type="Pfam" id="PF00042">
    <property type="entry name" value="Globin"/>
    <property type="match status" value="1"/>
</dbReference>
<dbReference type="PRINTS" id="PR00612">
    <property type="entry name" value="ALPHAHAEM"/>
</dbReference>
<dbReference type="PRINTS" id="PR00815">
    <property type="entry name" value="PIHAEM"/>
</dbReference>
<dbReference type="SUPFAM" id="SSF46458">
    <property type="entry name" value="Globin-like"/>
    <property type="match status" value="1"/>
</dbReference>
<dbReference type="PROSITE" id="PS01033">
    <property type="entry name" value="GLOBIN"/>
    <property type="match status" value="1"/>
</dbReference>
<organism>
    <name type="scientific">Pongo pygmaeus</name>
    <name type="common">Bornean orangutan</name>
    <dbReference type="NCBI Taxonomy" id="9600"/>
    <lineage>
        <taxon>Eukaryota</taxon>
        <taxon>Metazoa</taxon>
        <taxon>Chordata</taxon>
        <taxon>Craniata</taxon>
        <taxon>Vertebrata</taxon>
        <taxon>Euteleostomi</taxon>
        <taxon>Mammalia</taxon>
        <taxon>Eutheria</taxon>
        <taxon>Euarchontoglires</taxon>
        <taxon>Primates</taxon>
        <taxon>Haplorrhini</taxon>
        <taxon>Catarrhini</taxon>
        <taxon>Hominidae</taxon>
        <taxon>Pongo</taxon>
    </lineage>
</organism>
<keyword id="KW-0349">Heme</keyword>
<keyword id="KW-0408">Iron</keyword>
<keyword id="KW-0479">Metal-binding</keyword>
<keyword id="KW-0561">Oxygen transport</keyword>
<keyword id="KW-0813">Transport</keyword>
<comment type="similarity">
    <text evidence="1">Belongs to the globin family.</text>
</comment>
<sequence length="142" mass="15480">MALSAEDRALVRALWKKLGSNVGVYTTEALERTFLAFPATKTYFSHLDLSPGSSQVRAHGQKVADALSLAVERLDDLPHALSALSHLHACQLRVDPASFQLLGHCLLVTLARHYPGDFSPALQASLDKFLSHVISALASEYR</sequence>
<proteinExistence type="inferred from homology"/>
<feature type="chain" id="PRO_0000052848" description="Hemoglobin subunit theta-1">
    <location>
        <begin position="1"/>
        <end position="142"/>
    </location>
</feature>
<feature type="domain" description="Globin" evidence="1">
    <location>
        <begin position="2"/>
        <end position="142"/>
    </location>
</feature>
<feature type="binding site" description="distal binding residue">
    <location>
        <position position="59"/>
    </location>
    <ligand>
        <name>heme b</name>
        <dbReference type="ChEBI" id="CHEBI:60344"/>
    </ligand>
    <ligandPart>
        <name>Fe</name>
        <dbReference type="ChEBI" id="CHEBI:18248"/>
    </ligandPart>
</feature>
<feature type="binding site" description="proximal binding residue">
    <location>
        <position position="88"/>
    </location>
    <ligand>
        <name>heme b</name>
        <dbReference type="ChEBI" id="CHEBI:60344"/>
    </ligand>
    <ligandPart>
        <name>Fe</name>
        <dbReference type="ChEBI" id="CHEBI:18248"/>
    </ligandPart>
</feature>
<reference key="1">
    <citation type="journal article" date="1986" name="Nature">
        <title>Sequence organization and genomic complexity of primate theta 1 globin gene, a novel alpha-globin-like gene.</title>
        <authorList>
            <person name="Marks J."/>
            <person name="Shaw J.-P."/>
            <person name="Shen C.-K.J."/>
        </authorList>
    </citation>
    <scope>NUCLEOTIDE SEQUENCE [GENOMIC DNA]</scope>
</reference>
<accession>P06890</accession>
<name>HBAT_PONPY</name>
<evidence type="ECO:0000255" key="1">
    <source>
        <dbReference type="PROSITE-ProRule" id="PRU00238"/>
    </source>
</evidence>
<protein>
    <recommendedName>
        <fullName>Hemoglobin subunit theta-1</fullName>
    </recommendedName>
    <alternativeName>
        <fullName>Hemoglobin theta-1 chain</fullName>
    </alternativeName>
    <alternativeName>
        <fullName>Theta-1-globin</fullName>
    </alternativeName>
</protein>
<gene>
    <name type="primary">HBQ1</name>
</gene>